<evidence type="ECO:0000250" key="1">
    <source>
        <dbReference type="UniProtKB" id="P26662"/>
    </source>
</evidence>
<evidence type="ECO:0000250" key="2">
    <source>
        <dbReference type="UniProtKB" id="P26663"/>
    </source>
</evidence>
<evidence type="ECO:0000250" key="3">
    <source>
        <dbReference type="UniProtKB" id="P26664"/>
    </source>
</evidence>
<evidence type="ECO:0000250" key="4">
    <source>
        <dbReference type="UniProtKB" id="P27958"/>
    </source>
</evidence>
<evidence type="ECO:0000250" key="5">
    <source>
        <dbReference type="UniProtKB" id="P29846"/>
    </source>
</evidence>
<evidence type="ECO:0000250" key="6">
    <source>
        <dbReference type="UniProtKB" id="Q01403"/>
    </source>
</evidence>
<evidence type="ECO:0000250" key="7">
    <source>
        <dbReference type="UniProtKB" id="Q03463"/>
    </source>
</evidence>
<evidence type="ECO:0000250" key="8">
    <source>
        <dbReference type="UniProtKB" id="Q5EG65"/>
    </source>
</evidence>
<evidence type="ECO:0000250" key="9">
    <source>
        <dbReference type="UniProtKB" id="Q913V3"/>
    </source>
</evidence>
<evidence type="ECO:0000250" key="10">
    <source>
        <dbReference type="UniProtKB" id="Q99IB8"/>
    </source>
</evidence>
<evidence type="ECO:0000250" key="11">
    <source>
        <dbReference type="UniProtKB" id="Q9WMX2"/>
    </source>
</evidence>
<evidence type="ECO:0000255" key="12"/>
<evidence type="ECO:0000256" key="13">
    <source>
        <dbReference type="SAM" id="MobiDB-lite"/>
    </source>
</evidence>
<evidence type="ECO:0000305" key="14"/>
<sequence>MSTNPKPQRKTKRNTNRRPQDVKFPGGGQIVGGVYLLPRRGPRLGVRATRKTSERSQPRGRRQPIPKDRRSTGKSWGKPGYPWPLYGNEGCGWAGWLLSPRGSRPTWGPTDPRHRSRNLGKVIDTLTCGFADLMGYIPVVGAPVGGVARALAHGVRVLEDGINYATGNLPGCSFSIFLLALLSCVTVPVSAVEVRNISSSYYATNDCSNNSITWQLTNAVLHLPGCVPCENDNGTLRCWIQVTPNVAVKHRGALTHNLRTHVDMIVMAATVCSALYVGDICGAVMIASQAFIISPERHNFTQECNCSIYQGHITGHRMAWDMMLNWSPTLTMILAYAARVPELVLEVVFGGHWGVVFGLAYFSMQGAWAKVIAILLLVAGVDASTQVTGGQAAHTVRGVASIFSPGSRQDISLINTNGSWHINRTALNCNDSLQTGFFAALFYVRRFNSSGCPERLSSCRKLDDFRIGWGTLEYETNVTNEEDMRPYCWHYPPKPCGIVSAKTVCGPVYCFTPSPVVVGTTDRQGVPTYSWGENETDVFLLNSTRPPRGAWFGCTWMNGTGFTKTCGAPPCRIRRDYNGTLDLLCPTDCFRKHPDTTYLKCGAGPWLTPRCLVDYPYRLWHYPCTVNFTIFKVRMYVGGVEHRLDAACNFTRGDRCRLEDRDRSQQSPLLHSTTEWAVLPCSYSDLPALSTGLLHLHQNIVDVQYLYGLSPAITRHIVKWEWVILLFLLLADARVCA</sequence>
<reference key="1">
    <citation type="journal article" date="1992" name="Virology">
        <title>Full-length sequence of a hepatitis C virus genome having poor homology to reported isolates: comparative study of four distinct genotypes.</title>
        <authorList>
            <person name="Okamoto H."/>
            <person name="Kurai K."/>
            <person name="Okada S."/>
            <person name="Yamamoto K."/>
            <person name="Lizuka H."/>
            <person name="Tanaka T."/>
            <person name="Fukuda S."/>
            <person name="Tsuda F."/>
            <person name="Mishiro S."/>
        </authorList>
    </citation>
    <scope>NUCLEOTIDE SEQUENCE [GENOMIC RNA]</scope>
</reference>
<reference key="2">
    <citation type="journal article" date="2000" name="J. Viral Hepat.">
        <title>Properties of the hepatitis C virus core protein: a structural protein that modulates cellular processes.</title>
        <authorList>
            <person name="McLauchlan J."/>
        </authorList>
    </citation>
    <scope>REVIEW</scope>
</reference>
<reference key="3">
    <citation type="journal article" date="2004" name="Hepatology">
        <title>Structural biology of hepatitis C virus.</title>
        <authorList>
            <person name="Penin F."/>
            <person name="Dubuisson J."/>
            <person name="Rey F.A."/>
            <person name="Moradpour D."/>
            <person name="Pawlotsky J.-M."/>
        </authorList>
    </citation>
    <scope>REVIEW</scope>
</reference>
<name>POLG_HCVJ7</name>
<proteinExistence type="inferred from homology"/>
<comment type="function">
    <molecule>Mature core protein</molecule>
    <text evidence="1 3 4 5 10 14">Packages viral RNA to form a viral nucleocapsid, and promotes virion budding (Probable). Participates in the viral particle production as a result of its interaction with the non-structural protein 5A (By similarity). Binds RNA and may function as a RNA chaperone to induce the RNA structural rearrangements taking place during virus replication (By similarity). Modulates viral translation initiation by interacting with viral IRES and 40S ribosomal subunit (By similarity). Affects various cell signaling pathways, host immunity and lipid metabolism (Probable). Prevents the establishment of cellular antiviral state by blocking the interferon-alpha/beta (IFN-alpha/beta) and IFN-gamma signaling pathways and by blocking the formation of phosphorylated STAT1 and promoting ubiquitin-mediated proteasome-dependent degradation of STAT1 (By similarity). Activates STAT3 leading to cellular transformation (By similarity). Regulates the activity of cellular genes, including c-myc and c-fos (By similarity). May repress the promoter of p53, and sequester CREB3 and SP110 isoform 3/Sp110b in the cytoplasm (By similarity). Represses cell cycle negative regulating factor CDKN1A, thereby interrupting an important check point of normal cell cycle regulation (By similarity). Targets transcription factors involved in the regulation of inflammatory responses and in the immune response: suppresses TNF-induced NF-kappa-B activation, and activates AP-1 (By similarity). Binds to dendritic cells (DCs) via C1QR1, resulting in down-regulation of T-lymphocytes proliferation (By similarity). Alters lipid metabolism by interacting with hepatocellular proteins involved in lipid accumulation and storage (By similarity). Induces up-regulation of FAS promoter activity, and thereby contributes to the increased triglyceride accumulation in hepatocytes (steatosis) (By similarity).</text>
</comment>
<comment type="function">
    <molecule>Envelope glycoprotein E1</molecule>
    <text evidence="4">Forms a heterodimer with envelope glycoprotein E2, which mediates virus attachment to the host cell, virion internalization through clathrin-dependent endocytosis and fusion with host membrane (By similarity). Fusion with the host cell is most likely mediated by both E1 and E2, through conformational rearrangements of the heterodimer required for fusion rather than a classical class II fusion mechanism (By similarity). E1/E2 heterodimer binds host apolipoproteins such as APOB and ApoE thereby forming a lipo-viro-particle (LVP) (By similarity). APOE associated to the LVP allows the initial virus attachment to cell surface receptors such as the heparan sulfate proteoglycans (HSPGs), syndecan-1 (SDC1), syndecan-1 (SDC2), the low-density lipoprotein receptor (LDLR) and scavenger receptor class B type I (SCARB1) (By similarity). The cholesterol transfer activity of SCARB1 allows E2 exposure and binding of E2 to SCARB1 and the tetraspanin CD81 (By similarity). E1/E2 heterodimer binding on CD81 activates the epithelial growth factor receptor (EGFR) signaling pathway (By similarity). Diffusion of the complex E1-E2-EGFR-SCARB1-CD81 to the cell lateral membrane allows further interaction with Claudin 1 (CLDN1) and occludin (OCLN) to finally trigger HCV entry (By similarity).</text>
</comment>
<comment type="function">
    <molecule>Envelope glycoprotein E2</molecule>
    <text evidence="3 4">Forms a heterodimer with envelope glycoprotein E1, which mediates virus attachment to the host cell, virion internalization through clathrin-dependent endocytosis and fusion with host membrane (By similarity). Fusion with the host cell is most likely mediated by both E1 and E2, through conformational rearrangements of the heterodimer required for fusion rather than a classical class II fusion mechanism (By similarity). The interaction between envelope glycoprotein E2 and host apolipoprotein E/APOE allows the proper assembly, maturation and infectivity of the viral particles (By similarity). This interaction is probably promoted via the up-regulation of cellular autophagy by the virus (By similarity). E1/E2 heterodimer binds host apolipoproteins such as APOB and APOE thereby forming a lipo-viro-particle (LVP) (By similarity). APOE associated to the LVP allows the initial virus attachment to cell surface receptors such as the heparan sulfate proteoglycans (HSPGs), syndecan-1 (SDC1), syndecan-1 (SDC2), the low-density lipoprotein receptor (LDLR) and scavenger receptor class B type I (SCARB1) (By similarity). The cholesterol transfer activity of SCARB1 allows E2 exposure and binding of E2 to SCARB1 and the tetraspanin CD81 (By similarity). E1/E2 heterodimer binding on CD81 activates the epithelial growth factor receptor (EGFR) signaling pathway (By similarity). Diffusion of the complex E1-E2-EGFR-SCARB1-CD81 to the cell lateral membrane allows further interaction with Claudin 1 (CLDN1) and occludin (OCLN) to finally trigger HCV entry (By similarity). Inhibits host EIF2AK2/PKR activation, preventing the establishment of an antiviral state (By similarity). Viral ligand for CD209/DC-SIGN and CLEC4M/DC-SIGNR, which are respectively found on dendritic cells (DCs), and on liver sinusoidal endothelial cells and macrophage-like cells of lymph node sinuses (By similarity). These interactions allow the capture of circulating HCV particles by these cells and subsequent facilitated transmission to permissive cells such as hepatocytes and lymphocyte subpopulations (By similarity).</text>
</comment>
<comment type="subunit">
    <molecule>Mature core protein</molecule>
    <text evidence="1 3 4 5 7 8 10">Homooligomer (By similarity). Interacts with E1 (via C-terminus) (By similarity). Interacts with the non-structural protein 5A (By similarity). Interacts (via N-terminus) with host STAT1 (via SH2 domain); this interaction results in decreased STAT1 phosphorylation and ubiquitin-mediated proteasome-dependent STAT1 degradation, leading to decreased IFN-stimulated gene transcription (By similarity). Interacts with host STAT3; this interaction constitutively activates STAT3 (By similarity). Interacts with host LTBR receptor (By similarity). Interacts with host TNFRSF1A receptor and possibly induces apoptosis (By similarity). Interacts with host HNRPK (By similarity). Interacts with host YWHAE (By similarity). Interacts with host UBE3A/E6AP (By similarity). Interacts with host DDX3X (By similarity). Interacts with host APOA2 (By similarity). Interacts with host RXRA protein (By similarity). Interacts with host SP110 isoform 3/Sp110b; this interaction sequesters the transcriptional corepressor SP110 away from the nucleus (By similarity). Interacts with host CREB3 nuclear transcription protein; this interaction triggers cell transformation (By similarity). Interacts with host ACY3 (By similarity). Interacts with host C1QR1 (By similarity). Interacts with host RBM24; this interaction, which enhances the interaction of the mature core protein with 5'-UTR, may inhibit viral translation and favor replication (By similarity). Interacts with host EIF2AK2/PKR; this interaction induces the autophosphorylation of EIF2AK2 (By similarity). Part of the viral assembly initiation complex composed of NS2, E1, E2, NS3, NS4A, NS5A and the mature core protein (By similarity).</text>
</comment>
<comment type="subunit">
    <molecule>Envelope glycoprotein E1</molecule>
    <text evidence="4 10">Forms a heterodimer with envelope glycoprotein E2 (By similarity). Interacts with mature core protein (By similarity). Interacts with protease NS2 (By similarity). The heterodimer E1/E2 interacts with host CLDN1; this interaction plays a role in viral entry into host cell (By similarity). Interacts with host SPSB2 (via C-terminus) (By similarity). Part of the viral assembly initiation complex composed of NS2, E1, E2, NS3, NS4A, NS5A and the mature core protein (By similarity).</text>
</comment>
<comment type="subunit">
    <molecule>Envelope glycoprotein E2</molecule>
    <text evidence="4 10">Forms a heterodimer with envelope glycoprotein E1 (By similarity). Interacts with host CD81 and SCARB1 receptors; these interactions play a role in viral entry into host cell (By similarity). Interacts with host EIF2AK2/PKR; this interaction inhibits EIF2AK2 and probably allows the virus to evade the innate immune response (By similarity). Interacts with host CD209/DC-SIGN and CLEC4M/DC-SIGNR (By similarity). Interact with host SPCS1; this interaction is essential for viral particle assembly (By similarity). Interacts with protease NS2 (By similarity). The heterodimer E1/E2 interacts with host CLDN1; this interaction plays a role in viral entry into host cell (By similarity). Part of the viral assembly initiation complex composed of NS2, E1, E2, NS3, NS4A, NS5A and the mature core protein (By similarity).</text>
</comment>
<comment type="subcellular location">
    <molecule>Core protein precursor</molecule>
    <subcellularLocation>
        <location evidence="3">Host endoplasmic reticulum membrane</location>
        <topology evidence="12">Single-pass membrane protein</topology>
    </subcellularLocation>
    <subcellularLocation>
        <location evidence="3">Host mitochondrion membrane</location>
        <topology evidence="12">Single-pass type I membrane protein</topology>
    </subcellularLocation>
    <text>The C-terminal transmembrane domain of the core protein precursor contains an ER signal leading the nascent polyprotein to the ER membrane.</text>
</comment>
<comment type="subcellular location">
    <molecule>Mature core protein</molecule>
    <subcellularLocation>
        <location evidence="10">Virion</location>
    </subcellularLocation>
    <subcellularLocation>
        <location evidence="10">Host cytoplasm</location>
    </subcellularLocation>
    <subcellularLocation>
        <location evidence="1">Host nucleus</location>
    </subcellularLocation>
    <subcellularLocation>
        <location evidence="10">Host lipid droplet</location>
    </subcellularLocation>
    <text evidence="4">Only a minor proportion of core protein is present in the nucleus (By similarity). Probably present on the surface of lipid droplets (By similarity).</text>
</comment>
<comment type="subcellular location">
    <molecule>Envelope glycoprotein E1</molecule>
    <subcellularLocation>
        <location evidence="14">Virion membrane</location>
        <topology evidence="14">Single-pass type I membrane protein</topology>
    </subcellularLocation>
    <subcellularLocation>
        <location>Host endoplasmic reticulum membrane</location>
        <topology evidence="4">Single-pass type I membrane protein</topology>
    </subcellularLocation>
    <text evidence="4">The C-terminal transmembrane domain acts as a signal sequence and forms a hairpin structure before cleavage by host signal peptidase (By similarity). After cleavage, the membrane sequence is retained at the C-terminus of the protein, serving as ER membrane anchor (By similarity). A reorientation of the second hydrophobic stretch occurs after cleavage producing a single reoriented transmembrane domain (By similarity). These events explain the final topology of the protein (By similarity).</text>
</comment>
<comment type="subcellular location">
    <molecule>Envelope glycoprotein E2</molecule>
    <subcellularLocation>
        <location evidence="14">Virion membrane</location>
        <topology evidence="14">Single-pass type I membrane protein</topology>
    </subcellularLocation>
    <subcellularLocation>
        <location>Host endoplasmic reticulum membrane</location>
        <topology evidence="4">Single-pass type I membrane protein</topology>
    </subcellularLocation>
    <subcellularLocation>
        <location evidence="11">Host lipid droplet</location>
    </subcellularLocation>
    <text evidence="4">The C-terminal transmembrane domain acts as a signal sequence and forms a hairpin structure before cleavage by host signal peptidase (By similarity). After cleavage, the membrane sequence is retained at the C-terminus of the protein, serving as ER membrane anchor (By similarity). A reorientation of the second hydrophobic stretch occurs after cleavage producing a single reoriented transmembrane domain (By similarity). These events explain the final topology of the protein (By similarity).</text>
</comment>
<comment type="domain">
    <molecule>Envelope glycoprotein E1</molecule>
    <text evidence="4">The transmembrane regions of envelope E1 and E2 glycoproteins are involved in heterodimer formation, ER localization, and assembly of these proteins.</text>
</comment>
<comment type="domain">
    <molecule>Envelope glycoprotein E2</molecule>
    <text evidence="2 4">The transmembrane regions of envelope E1 and E2 glycoproteins are involved in heterodimer formation, ER localization, and assembly of these proteins (By similarity). Envelope E2 glycoprotein contain two highly variable regions called hypervariable region 1 and 2 (HVR1 and HVR2) (By similarity). E2 also contain two segments involved in CD81-binding (By similarity). HVR1 is implicated in the SCARB1-mediated cell entry and probably acts as a regulator of the association of particles with lipids (By similarity).</text>
</comment>
<comment type="PTM">
    <molecule>Genome polyprotein</molecule>
    <text evidence="3 4">Specific enzymatic cleavages in vivo yield mature proteins (By similarity). The structural proteins, core, E1, E2 and p7 are produced by proteolytic processing by host signal peptidases (By similarity). The core protein precursor is synthesized as a 23 kDa, which is retained in the ER membrane through the hydrophobic signal peptide (By similarity). Cleavage by the signal peptidase releases the 21 kDa mature core protein (By similarity). The cleavage of the core protein precursor occurs between aminoacids 176 and 188 but the exact cleavage site is not known (By similarity). Some degraded forms of the core protein appear as well during the course of infection (By similarity). The other proteins (p7, NS2, NS3, NS4A, NS4B, NS5A and NS5B) are cleaved by the viral proteases (By similarity). Autoprocessing between NS2 and NS3 is mediated by the NS2 cysteine protease catalytic domain and regulated by the NS3 N-terminal domain (By similarity).</text>
</comment>
<comment type="PTM">
    <molecule>Mature core protein</molecule>
    <text evidence="6">Phosphorylated by host PKC and PKA.</text>
</comment>
<comment type="PTM">
    <molecule>Mature core protein</molecule>
    <text evidence="7">Ubiquitinated; mediated by UBE3A and leading to core protein subsequent proteasomal degradation.</text>
</comment>
<comment type="PTM">
    <molecule>Envelope glycoprotein E1</molecule>
    <text evidence="4">Highly N-glycosylated.</text>
</comment>
<comment type="PTM">
    <molecule>Envelope glycoprotein E2</molecule>
    <text evidence="4">Highly N-glycosylated.</text>
</comment>
<comment type="miscellaneous">
    <text evidence="14">Viral particle assembly takes place at the surface of ER-derived membranes in close proximity to lipid droplets. NS2 associates with E1/E2 glycoproteins, NS3 and NS5A, which interacts with the viral RNA and core protein to promote genome encapsidation. The nucleocapsid buds at the ER membrane where E1/E2 glycoproteins are anchored and afterward associate with nascent lipid droplet to acquire APOE and APOC. Secretion of viral particles is probably regulated by viroporin p7.</text>
</comment>
<comment type="miscellaneous">
    <molecule>Mature core protein</molecule>
    <text evidence="1">Exerts viral interference on hepatitis B virus when HCV and HBV coinfect the same cell, by suppressing HBV gene expression, RNA encapsidation and budding.</text>
</comment>
<comment type="similarity">
    <text evidence="14">Belongs to the hepacivirus polyprotein family.</text>
</comment>
<comment type="caution">
    <text evidence="14">The core gene probably also codes for alternative reading frame proteins (ARFPs). Many functions depicted for the core protein might belong to the ARFPs.</text>
</comment>
<accession>P27961</accession>
<keyword id="KW-0007">Acetylation</keyword>
<keyword id="KW-0053">Apoptosis</keyword>
<keyword id="KW-0167">Capsid protein</keyword>
<keyword id="KW-1165">Clathrin-mediated endocytosis of virus by host</keyword>
<keyword id="KW-1015">Disulfide bond</keyword>
<keyword id="KW-1170">Fusion of virus membrane with host endosomal membrane</keyword>
<keyword id="KW-1168">Fusion of virus membrane with host membrane</keyword>
<keyword id="KW-0325">Glycoprotein</keyword>
<keyword id="KW-1035">Host cytoplasm</keyword>
<keyword id="KW-1038">Host endoplasmic reticulum</keyword>
<keyword id="KW-1041">Host lipid droplet</keyword>
<keyword id="KW-1043">Host membrane</keyword>
<keyword id="KW-1045">Host mitochondrion</keyword>
<keyword id="KW-1048">Host nucleus</keyword>
<keyword id="KW-0945">Host-virus interaction</keyword>
<keyword id="KW-1090">Inhibition of host innate immune response by virus</keyword>
<keyword id="KW-0922">Interferon antiviral system evasion</keyword>
<keyword id="KW-0472">Membrane</keyword>
<keyword id="KW-0553">Oncogene</keyword>
<keyword id="KW-0597">Phosphoprotein</keyword>
<keyword id="KW-0687">Ribonucleoprotein</keyword>
<keyword id="KW-0694">RNA-binding</keyword>
<keyword id="KW-0812">Transmembrane</keyword>
<keyword id="KW-1133">Transmembrane helix</keyword>
<keyword id="KW-0832">Ubl conjugation</keyword>
<keyword id="KW-1161">Viral attachment to host cell</keyword>
<keyword id="KW-0261">Viral envelope protein</keyword>
<keyword id="KW-0899">Viral immunoevasion</keyword>
<keyword id="KW-0543">Viral nucleoprotein</keyword>
<keyword id="KW-1162">Viral penetration into host cytoplasm</keyword>
<keyword id="KW-0946">Virion</keyword>
<keyword id="KW-1164">Virus endocytosis by host</keyword>
<keyword id="KW-1160">Virus entry into host cell</keyword>
<protein>
    <recommendedName>
        <fullName>Genome polyprotein</fullName>
    </recommendedName>
    <component>
        <recommendedName>
            <fullName>Core protein precursor</fullName>
        </recommendedName>
        <alternativeName>
            <fullName>Capsid protein C</fullName>
        </alternativeName>
        <alternativeName>
            <fullName>p23</fullName>
        </alternativeName>
    </component>
    <component>
        <recommendedName>
            <fullName>Mature core protein</fullName>
        </recommendedName>
        <alternativeName>
            <fullName>p21</fullName>
        </alternativeName>
    </component>
    <component>
        <recommendedName>
            <fullName>Envelope glycoprotein E1</fullName>
        </recommendedName>
        <alternativeName>
            <fullName>gp32</fullName>
        </alternativeName>
        <alternativeName>
            <fullName>gp35</fullName>
        </alternativeName>
    </component>
    <component>
        <recommendedName>
            <fullName>Envelope glycoprotein E2</fullName>
        </recommendedName>
        <alternativeName>
            <fullName>NS1</fullName>
        </alternativeName>
        <alternativeName>
            <fullName>gp68</fullName>
        </alternativeName>
        <alternativeName>
            <fullName>gp70</fullName>
        </alternativeName>
    </component>
</protein>
<organism>
    <name type="scientific">Hepatitis C virus (isolate HC-J7)</name>
    <name type="common">HCV</name>
    <dbReference type="NCBI Taxonomy" id="11114"/>
    <lineage>
        <taxon>Viruses</taxon>
        <taxon>Riboviria</taxon>
        <taxon>Orthornavirae</taxon>
        <taxon>Kitrinoviricota</taxon>
        <taxon>Flasuviricetes</taxon>
        <taxon>Amarillovirales</taxon>
        <taxon>Flaviviridae</taxon>
        <taxon>Hepacivirus</taxon>
        <taxon>Hepacivirus hominis</taxon>
    </lineage>
</organism>
<dbReference type="EMBL" id="D10077">
    <property type="protein sequence ID" value="BAA00971.1"/>
    <property type="molecule type" value="Genomic_RNA"/>
</dbReference>
<dbReference type="SMR" id="P27961"/>
<dbReference type="euHCVdb" id="D10077"/>
<dbReference type="GO" id="GO:0044167">
    <property type="term" value="C:host cell endoplasmic reticulum membrane"/>
    <property type="evidence" value="ECO:0007669"/>
    <property type="project" value="UniProtKB-SubCell"/>
</dbReference>
<dbReference type="GO" id="GO:0044186">
    <property type="term" value="C:host cell lipid droplet"/>
    <property type="evidence" value="ECO:0007669"/>
    <property type="project" value="UniProtKB-SubCell"/>
</dbReference>
<dbReference type="GO" id="GO:0044191">
    <property type="term" value="C:host cell mitochondrial membrane"/>
    <property type="evidence" value="ECO:0007669"/>
    <property type="project" value="UniProtKB-SubCell"/>
</dbReference>
<dbReference type="GO" id="GO:0042025">
    <property type="term" value="C:host cell nucleus"/>
    <property type="evidence" value="ECO:0007669"/>
    <property type="project" value="UniProtKB-SubCell"/>
</dbReference>
<dbReference type="GO" id="GO:0016020">
    <property type="term" value="C:membrane"/>
    <property type="evidence" value="ECO:0007669"/>
    <property type="project" value="UniProtKB-KW"/>
</dbReference>
<dbReference type="GO" id="GO:1990904">
    <property type="term" value="C:ribonucleoprotein complex"/>
    <property type="evidence" value="ECO:0007669"/>
    <property type="project" value="UniProtKB-KW"/>
</dbReference>
<dbReference type="GO" id="GO:0019031">
    <property type="term" value="C:viral envelope"/>
    <property type="evidence" value="ECO:0007669"/>
    <property type="project" value="UniProtKB-KW"/>
</dbReference>
<dbReference type="GO" id="GO:0019013">
    <property type="term" value="C:viral nucleocapsid"/>
    <property type="evidence" value="ECO:0007669"/>
    <property type="project" value="UniProtKB-KW"/>
</dbReference>
<dbReference type="GO" id="GO:0055036">
    <property type="term" value="C:virion membrane"/>
    <property type="evidence" value="ECO:0007669"/>
    <property type="project" value="UniProtKB-SubCell"/>
</dbReference>
<dbReference type="GO" id="GO:0003723">
    <property type="term" value="F:RNA binding"/>
    <property type="evidence" value="ECO:0007669"/>
    <property type="project" value="UniProtKB-KW"/>
</dbReference>
<dbReference type="GO" id="GO:0005198">
    <property type="term" value="F:structural molecule activity"/>
    <property type="evidence" value="ECO:0007669"/>
    <property type="project" value="InterPro"/>
</dbReference>
<dbReference type="GO" id="GO:0075512">
    <property type="term" value="P:clathrin-dependent endocytosis of virus by host cell"/>
    <property type="evidence" value="ECO:0007669"/>
    <property type="project" value="UniProtKB-KW"/>
</dbReference>
<dbReference type="GO" id="GO:0039654">
    <property type="term" value="P:fusion of virus membrane with host endosome membrane"/>
    <property type="evidence" value="ECO:0007669"/>
    <property type="project" value="UniProtKB-KW"/>
</dbReference>
<dbReference type="GO" id="GO:0052170">
    <property type="term" value="P:symbiont-mediated suppression of host innate immune response"/>
    <property type="evidence" value="ECO:0007669"/>
    <property type="project" value="UniProtKB-KW"/>
</dbReference>
<dbReference type="GO" id="GO:0019062">
    <property type="term" value="P:virion attachment to host cell"/>
    <property type="evidence" value="ECO:0007669"/>
    <property type="project" value="UniProtKB-KW"/>
</dbReference>
<dbReference type="FunFam" id="3.30.160.890:FF:000001">
    <property type="entry name" value="Genome polyprotein"/>
    <property type="match status" value="1"/>
</dbReference>
<dbReference type="FunFam" id="4.10.710.10:FF:000001">
    <property type="entry name" value="Genome polyprotein"/>
    <property type="match status" value="1"/>
</dbReference>
<dbReference type="Gene3D" id="4.10.710.10">
    <property type="entry name" value="Hepatitis C Virus Capsid Protein, Chain A"/>
    <property type="match status" value="1"/>
</dbReference>
<dbReference type="Gene3D" id="3.30.160.890">
    <property type="entry name" value="Hepatitis C virus envelope glycoprotein E1, chain C"/>
    <property type="match status" value="1"/>
</dbReference>
<dbReference type="InterPro" id="IPR002521">
    <property type="entry name" value="HCV_Core_C"/>
</dbReference>
<dbReference type="InterPro" id="IPR044896">
    <property type="entry name" value="HCV_core_chain_A"/>
</dbReference>
<dbReference type="InterPro" id="IPR002522">
    <property type="entry name" value="HCV_core_N"/>
</dbReference>
<dbReference type="InterPro" id="IPR002519">
    <property type="entry name" value="HCV_Env"/>
</dbReference>
<dbReference type="InterPro" id="IPR002531">
    <property type="entry name" value="HCV_NS1"/>
</dbReference>
<dbReference type="Pfam" id="PF01543">
    <property type="entry name" value="HCV_capsid"/>
    <property type="match status" value="1"/>
</dbReference>
<dbReference type="Pfam" id="PF01542">
    <property type="entry name" value="HCV_core"/>
    <property type="match status" value="1"/>
</dbReference>
<dbReference type="Pfam" id="PF01539">
    <property type="entry name" value="HCV_env"/>
    <property type="match status" value="1"/>
</dbReference>
<dbReference type="Pfam" id="PF01560">
    <property type="entry name" value="HCV_NS1"/>
    <property type="match status" value="1"/>
</dbReference>
<feature type="initiator methionine" description="Removed; by host" evidence="3">
    <location>
        <position position="1"/>
    </location>
</feature>
<feature type="chain" id="PRO_0000450915" description="Genome polyprotein">
    <location>
        <begin position="2"/>
        <end position="737" status="greater than"/>
    </location>
</feature>
<feature type="chain" id="PRO_0000037620" description="Core protein precursor">
    <location>
        <begin position="2"/>
        <end position="191"/>
    </location>
</feature>
<feature type="chain" id="PRO_0000037621" description="Mature core protein">
    <location>
        <begin position="2"/>
        <end position="177"/>
    </location>
</feature>
<feature type="propeptide" id="PRO_0000037622" description="ER anchor for the core protein, removed in mature form by host signal peptidase">
    <location>
        <begin position="178"/>
        <end position="191"/>
    </location>
</feature>
<feature type="chain" id="PRO_0000037623" description="Envelope glycoprotein E1">
    <location>
        <begin position="192"/>
        <end position="383"/>
    </location>
</feature>
<feature type="chain" id="PRO_0000037624" description="Envelope glycoprotein E2">
    <location>
        <begin position="384"/>
        <end position="737" status="greater than"/>
    </location>
</feature>
<feature type="topological domain" description="Cytoplasmic" evidence="12">
    <location>
        <begin position="2"/>
        <end position="168"/>
    </location>
</feature>
<feature type="transmembrane region" description="Helical" evidence="12">
    <location>
        <begin position="169"/>
        <end position="189"/>
    </location>
</feature>
<feature type="topological domain" description="Lumenal" evidence="4">
    <location>
        <begin position="190"/>
        <end position="358"/>
    </location>
</feature>
<feature type="transmembrane region" description="Helical" evidence="4">
    <location>
        <begin position="359"/>
        <end position="379"/>
    </location>
</feature>
<feature type="topological domain" description="Lumenal" evidence="4">
    <location>
        <begin position="380"/>
        <end position="729"/>
    </location>
</feature>
<feature type="transmembrane region" description="Helical" evidence="4">
    <location>
        <begin position="730"/>
        <end position="737" status="greater than"/>
    </location>
</feature>
<feature type="region of interest" description="Disordered" evidence="4">
    <location>
        <begin position="2"/>
        <end position="75"/>
    </location>
</feature>
<feature type="region of interest" description="Interaction with DDX3X" evidence="8">
    <location>
        <begin position="2"/>
        <end position="59"/>
    </location>
</feature>
<feature type="region of interest" description="Interaction with EIF2AK2/PKR" evidence="1">
    <location>
        <begin position="2"/>
        <end position="58"/>
    </location>
</feature>
<feature type="region of interest" description="Interaction with STAT1" evidence="1">
    <location>
        <begin position="2"/>
        <end position="23"/>
    </location>
</feature>
<feature type="region of interest" description="Important for endoplasmic reticulum and mitochondrial localization" evidence="1">
    <location>
        <begin position="112"/>
        <end position="152"/>
    </location>
</feature>
<feature type="region of interest" description="Interaction with APOA2" evidence="5">
    <location>
        <begin position="122"/>
        <end position="173"/>
    </location>
</feature>
<feature type="region of interest" description="Important for lipid droplets localization" evidence="4">
    <location>
        <begin position="164"/>
        <end position="167"/>
    </location>
</feature>
<feature type="region of interest" description="Important for fusion" evidence="4">
    <location>
        <begin position="265"/>
        <end position="296"/>
    </location>
</feature>
<feature type="region of interest" description="HVR1" evidence="4">
    <location>
        <begin position="385"/>
        <end position="411"/>
    </location>
</feature>
<feature type="region of interest" description="HVR2" evidence="4">
    <location>
        <begin position="474"/>
        <end position="481"/>
    </location>
</feature>
<feature type="region of interest" description="CD81-binding 1" evidence="2">
    <location>
        <begin position="482"/>
        <end position="495"/>
    </location>
</feature>
<feature type="region of interest" description="CD81-binding 2" evidence="2">
    <location>
        <begin position="546"/>
        <end position="553"/>
    </location>
</feature>
<feature type="region of interest" description="PKR/eIF2-alpha phosphorylation homology domain (PePHD)">
    <location>
        <begin position="664"/>
        <end position="675"/>
    </location>
</feature>
<feature type="short sequence motif" description="Nuclear localization signal" evidence="10">
    <location>
        <begin position="5"/>
        <end position="13"/>
    </location>
</feature>
<feature type="short sequence motif" description="Nuclear localization signal" evidence="10">
    <location>
        <begin position="38"/>
        <end position="43"/>
    </location>
</feature>
<feature type="short sequence motif" description="Nuclear localization signal" evidence="10">
    <location>
        <begin position="58"/>
        <end position="64"/>
    </location>
</feature>
<feature type="short sequence motif" description="Nuclear localization signal" evidence="10">
    <location>
        <begin position="66"/>
        <end position="71"/>
    </location>
</feature>
<feature type="compositionally biased region" description="Basic residues" evidence="13">
    <location>
        <begin position="7"/>
        <end position="16"/>
    </location>
</feature>
<feature type="compositionally biased region" description="Low complexity" evidence="13">
    <location>
        <begin position="32"/>
        <end position="47"/>
    </location>
</feature>
<feature type="site" description="Cleavage; by host signal peptide peptidase" evidence="1">
    <location>
        <begin position="177"/>
        <end position="178"/>
    </location>
</feature>
<feature type="site" description="Cleavage; by host signal peptidase" evidence="1">
    <location>
        <begin position="191"/>
        <end position="192"/>
    </location>
</feature>
<feature type="site" description="Cleavage; by host signal peptidase" evidence="1">
    <location>
        <begin position="383"/>
        <end position="384"/>
    </location>
</feature>
<feature type="modified residue" description="N-acetylserine; by host" evidence="9">
    <location>
        <position position="2"/>
    </location>
</feature>
<feature type="modified residue" description="Phosphoserine; by host" evidence="6">
    <location>
        <position position="53"/>
    </location>
</feature>
<feature type="modified residue" description="Phosphoserine; by host" evidence="6">
    <location>
        <position position="99"/>
    </location>
</feature>
<feature type="modified residue" description="Phosphoserine; by host" evidence="6">
    <location>
        <position position="116"/>
    </location>
</feature>
<feature type="glycosylation site" description="N-linked (GlcNAc...) asparagine; by host" evidence="4">
    <location>
        <position position="196"/>
    </location>
</feature>
<feature type="glycosylation site" description="N-linked (GlcNAc...) asparagine; by host" evidence="4">
    <location>
        <position position="209"/>
    </location>
</feature>
<feature type="glycosylation site" description="N-linked (GlcNAc...) asparagine; by host" evidence="4">
    <location>
        <position position="233"/>
    </location>
</feature>
<feature type="glycosylation site" description="N-linked (GlcNAc...) asparagine; by host" evidence="12">
    <location>
        <position position="305"/>
    </location>
</feature>
<feature type="glycosylation site" description="N-linked (GlcNAc...) (high mannose) asparagine; by host" evidence="4">
    <location>
        <position position="417"/>
    </location>
</feature>
<feature type="glycosylation site" description="N-linked (GlcNAc...) (high mannose) asparagine; by host" evidence="4">
    <location>
        <position position="423"/>
    </location>
</feature>
<feature type="glycosylation site" description="N-linked (GlcNAc...) (high mannose) asparagine; by host" evidence="4">
    <location>
        <position position="430"/>
    </location>
</feature>
<feature type="glycosylation site" description="N-linked (GlcNAc...) (high mannose) asparagine; by host" evidence="4">
    <location>
        <position position="448"/>
    </location>
</feature>
<feature type="glycosylation site" description="N-linked (GlcNAc...) asparagine; by host" evidence="12">
    <location>
        <position position="542"/>
    </location>
</feature>
<feature type="glycosylation site" description="N-linked (GlcNAc...) (high mannose) asparagine; by host" evidence="4">
    <location>
        <position position="558"/>
    </location>
</feature>
<feature type="glycosylation site" description="N-linked (GlcNAc...) (high mannose) asparagine; by host" evidence="4">
    <location>
        <position position="627"/>
    </location>
</feature>
<feature type="glycosylation site" description="N-linked (GlcNAc...) (high mannose) asparagine; by host" evidence="4">
    <location>
        <position position="649"/>
    </location>
</feature>
<feature type="disulfide bond" evidence="4">
    <location>
        <begin position="429"/>
        <end position="554"/>
    </location>
</feature>
<feature type="disulfide bond" evidence="4">
    <location>
        <begin position="452"/>
        <end position="459"/>
    </location>
</feature>
<feature type="disulfide bond" evidence="4">
    <location>
        <begin position="488"/>
        <end position="496"/>
    </location>
</feature>
<feature type="disulfide bond" evidence="4">
    <location>
        <begin position="505"/>
        <end position="510"/>
    </location>
</feature>
<feature type="disulfide bond" evidence="4">
    <location>
        <begin position="566"/>
        <end position="571"/>
    </location>
</feature>
<feature type="disulfide bond" evidence="4">
    <location>
        <begin position="585"/>
        <end position="589"/>
    </location>
</feature>
<feature type="disulfide bond" evidence="4">
    <location>
        <begin position="601"/>
        <end position="624"/>
    </location>
</feature>
<feature type="disulfide bond" evidence="4">
    <location>
        <begin position="611"/>
        <end position="648"/>
    </location>
</feature>
<feature type="disulfide bond" evidence="4">
    <location>
        <begin position="656"/>
        <end position="681"/>
    </location>
</feature>
<feature type="non-terminal residue">
    <location>
        <position position="737"/>
    </location>
</feature>
<organismHost>
    <name type="scientific">Homo sapiens</name>
    <name type="common">Human</name>
    <dbReference type="NCBI Taxonomy" id="9606"/>
</organismHost>